<gene>
    <name evidence="5 9" type="primary">EEIG1</name>
    <name type="synonym">C9orf132</name>
    <name type="synonym">FAM102A</name>
</gene>
<dbReference type="EMBL" id="AL157935">
    <property type="status" value="NOT_ANNOTATED_CDS"/>
    <property type="molecule type" value="Genomic_DNA"/>
</dbReference>
<dbReference type="EMBL" id="BC137087">
    <property type="protein sequence ID" value="AAI37088.1"/>
    <property type="molecule type" value="mRNA"/>
</dbReference>
<dbReference type="EMBL" id="BC137088">
    <property type="protein sequence ID" value="AAI37089.1"/>
    <property type="molecule type" value="mRNA"/>
</dbReference>
<dbReference type="EMBL" id="AK074108">
    <property type="protein sequence ID" value="BAB84934.1"/>
    <property type="molecule type" value="mRNA"/>
</dbReference>
<dbReference type="CCDS" id="CCDS35150.1">
    <molecule id="Q5T9C2-1"/>
</dbReference>
<dbReference type="CCDS" id="CCDS6888.1">
    <molecule id="Q5T9C2-3"/>
</dbReference>
<dbReference type="RefSeq" id="NP_001030331.1">
    <molecule id="Q5T9C2-1"/>
    <property type="nucleotide sequence ID" value="NM_001035254.3"/>
</dbReference>
<dbReference type="RefSeq" id="NP_976050.1">
    <molecule id="Q5T9C2-3"/>
    <property type="nucleotide sequence ID" value="NM_203305.3"/>
</dbReference>
<dbReference type="BioGRID" id="134377">
    <property type="interactions" value="156"/>
</dbReference>
<dbReference type="CORUM" id="Q5T9C2"/>
<dbReference type="FunCoup" id="Q5T9C2">
    <property type="interactions" value="1801"/>
</dbReference>
<dbReference type="IntAct" id="Q5T9C2">
    <property type="interactions" value="11"/>
</dbReference>
<dbReference type="MINT" id="Q5T9C2"/>
<dbReference type="STRING" id="9606.ENSP00000362187"/>
<dbReference type="GlyGen" id="Q5T9C2">
    <property type="glycosylation" value="1 site, 1 O-linked glycan (1 site)"/>
</dbReference>
<dbReference type="iPTMnet" id="Q5T9C2"/>
<dbReference type="PhosphoSitePlus" id="Q5T9C2"/>
<dbReference type="BioMuta" id="FAM102A"/>
<dbReference type="DMDM" id="118572304"/>
<dbReference type="jPOST" id="Q5T9C2"/>
<dbReference type="MassIVE" id="Q5T9C2"/>
<dbReference type="PaxDb" id="9606-ENSP00000362187"/>
<dbReference type="PeptideAtlas" id="Q5T9C2"/>
<dbReference type="ProteomicsDB" id="64787">
    <molecule id="Q5T9C2-1"/>
</dbReference>
<dbReference type="ProteomicsDB" id="64788">
    <molecule id="Q5T9C2-2"/>
</dbReference>
<dbReference type="ProteomicsDB" id="64789">
    <molecule id="Q5T9C2-3"/>
</dbReference>
<dbReference type="Antibodypedia" id="51717">
    <property type="antibodies" value="12 antibodies from 9 providers"/>
</dbReference>
<dbReference type="DNASU" id="399665"/>
<dbReference type="Ensembl" id="ENST00000373084.8">
    <molecule id="Q5T9C2-3"/>
    <property type="protein sequence ID" value="ENSP00000362176.4"/>
    <property type="gene ID" value="ENSG00000167106.12"/>
</dbReference>
<dbReference type="Ensembl" id="ENST00000373095.6">
    <molecule id="Q5T9C2-1"/>
    <property type="protein sequence ID" value="ENSP00000362187.1"/>
    <property type="gene ID" value="ENSG00000167106.12"/>
</dbReference>
<dbReference type="GeneID" id="399665"/>
<dbReference type="KEGG" id="hsa:399665"/>
<dbReference type="MANE-Select" id="ENST00000373095.6">
    <property type="protein sequence ID" value="ENSP00000362187.1"/>
    <property type="RefSeq nucleotide sequence ID" value="NM_001035254.3"/>
    <property type="RefSeq protein sequence ID" value="NP_001030331.1"/>
</dbReference>
<dbReference type="UCSC" id="uc004bsw.2">
    <molecule id="Q5T9C2-1"/>
    <property type="organism name" value="human"/>
</dbReference>
<dbReference type="AGR" id="HGNC:31419"/>
<dbReference type="CTD" id="399665"/>
<dbReference type="DisGeNET" id="399665"/>
<dbReference type="GeneCards" id="EEIG1"/>
<dbReference type="HGNC" id="HGNC:31419">
    <property type="gene designation" value="EEIG1"/>
</dbReference>
<dbReference type="HPA" id="ENSG00000167106">
    <property type="expression patterns" value="Low tissue specificity"/>
</dbReference>
<dbReference type="MIM" id="610891">
    <property type="type" value="gene"/>
</dbReference>
<dbReference type="neXtProt" id="NX_Q5T9C2"/>
<dbReference type="OpenTargets" id="ENSG00000167106"/>
<dbReference type="PharmGKB" id="PA142671784"/>
<dbReference type="VEuPathDB" id="HostDB:ENSG00000167106"/>
<dbReference type="eggNOG" id="ENOG502QRRN">
    <property type="taxonomic scope" value="Eukaryota"/>
</dbReference>
<dbReference type="GeneTree" id="ENSGT00940000156811"/>
<dbReference type="HOGENOM" id="CLU_024948_1_1_1"/>
<dbReference type="InParanoid" id="Q5T9C2"/>
<dbReference type="OMA" id="RPPVKQN"/>
<dbReference type="OrthoDB" id="3365224at2759"/>
<dbReference type="PAN-GO" id="Q5T9C2">
    <property type="GO annotations" value="0 GO annotations based on evolutionary models"/>
</dbReference>
<dbReference type="PhylomeDB" id="Q5T9C2"/>
<dbReference type="TreeFam" id="TF320966"/>
<dbReference type="PathwayCommons" id="Q5T9C2"/>
<dbReference type="SignaLink" id="Q5T9C2"/>
<dbReference type="BioGRID-ORCS" id="399665">
    <property type="hits" value="19 hits in 1161 CRISPR screens"/>
</dbReference>
<dbReference type="ChiTaRS" id="FAM102A">
    <property type="organism name" value="human"/>
</dbReference>
<dbReference type="GenomeRNAi" id="399665"/>
<dbReference type="Pharos" id="Q5T9C2">
    <property type="development level" value="Tdark"/>
</dbReference>
<dbReference type="PRO" id="PR:Q5T9C2"/>
<dbReference type="Proteomes" id="UP000005640">
    <property type="component" value="Chromosome 9"/>
</dbReference>
<dbReference type="RNAct" id="Q5T9C2">
    <property type="molecule type" value="protein"/>
</dbReference>
<dbReference type="Bgee" id="ENSG00000167106">
    <property type="expression patterns" value="Expressed in gall bladder and 191 other cell types or tissues"/>
</dbReference>
<dbReference type="GO" id="GO:0005737">
    <property type="term" value="C:cytoplasm"/>
    <property type="evidence" value="ECO:0000250"/>
    <property type="project" value="UniProtKB"/>
</dbReference>
<dbReference type="GO" id="GO:0045121">
    <property type="term" value="C:membrane raft"/>
    <property type="evidence" value="ECO:0000250"/>
    <property type="project" value="UniProtKB"/>
</dbReference>
<dbReference type="GO" id="GO:0005634">
    <property type="term" value="C:nucleus"/>
    <property type="evidence" value="ECO:0000250"/>
    <property type="project" value="UniProtKB"/>
</dbReference>
<dbReference type="GO" id="GO:0045672">
    <property type="term" value="P:positive regulation of osteoclast differentiation"/>
    <property type="evidence" value="ECO:0000250"/>
    <property type="project" value="UniProtKB"/>
</dbReference>
<dbReference type="InterPro" id="IPR039931">
    <property type="entry name" value="EEIG1/2-like"/>
</dbReference>
<dbReference type="InterPro" id="IPR019448">
    <property type="entry name" value="NT-C2"/>
</dbReference>
<dbReference type="PANTHER" id="PTHR21456:SF2">
    <property type="entry name" value="EARLY ESTROGEN-INDUCED GENE 1 PROTEIN"/>
    <property type="match status" value="1"/>
</dbReference>
<dbReference type="PANTHER" id="PTHR21456">
    <property type="entry name" value="FAMILY WITH SEQUENCE SIMILARITY 102"/>
    <property type="match status" value="1"/>
</dbReference>
<dbReference type="Pfam" id="PF10358">
    <property type="entry name" value="NT-C2"/>
    <property type="match status" value="1"/>
</dbReference>
<dbReference type="PROSITE" id="PS51840">
    <property type="entry name" value="C2_NT"/>
    <property type="match status" value="1"/>
</dbReference>
<sequence length="384" mass="41785">MAFLMKKKKFKFQTTFTLEELTAVPFVNGVLFCKVRLLDGGDFVSLSSREEVQENCVRWRKRFTFVCKMSANPATGLLDPCVFRVSVRKELKGGKAYSKLGFADLNLAEFAGSGSTVRCCLLEGYDTKNTRQDNSILKVTIGMFLLSGDPCFKTPPSTAKSISIPGQDSSLQLTCKGGGTSSGGSSTNSLTGSRPPKARPTILSSGLPEEPDQNLSSPEEVFHSGHSRNSSYASQQSKISGYSTEHSRSSSLSDLTHRRNTSTSSSASGGLGMTVEGPEGSEREHRPPEKPPRPPRPLHLSDRSFRRKKDSVESHPTWVDDTRIDADAIVEKIVQSQDFTDGSNTEDSNLRLFVSRDGSATLSGIQLATRVSSGVYEPVVIESH</sequence>
<organism>
    <name type="scientific">Homo sapiens</name>
    <name type="common">Human</name>
    <dbReference type="NCBI Taxonomy" id="9606"/>
    <lineage>
        <taxon>Eukaryota</taxon>
        <taxon>Metazoa</taxon>
        <taxon>Chordata</taxon>
        <taxon>Craniata</taxon>
        <taxon>Vertebrata</taxon>
        <taxon>Euteleostomi</taxon>
        <taxon>Mammalia</taxon>
        <taxon>Eutheria</taxon>
        <taxon>Euarchontoglires</taxon>
        <taxon>Primates</taxon>
        <taxon>Haplorrhini</taxon>
        <taxon>Catarrhini</taxon>
        <taxon>Hominidae</taxon>
        <taxon>Homo</taxon>
    </lineage>
</organism>
<reference key="1">
    <citation type="journal article" date="2004" name="Nature">
        <title>DNA sequence and analysis of human chromosome 9.</title>
        <authorList>
            <person name="Humphray S.J."/>
            <person name="Oliver K."/>
            <person name="Hunt A.R."/>
            <person name="Plumb R.W."/>
            <person name="Loveland J.E."/>
            <person name="Howe K.L."/>
            <person name="Andrews T.D."/>
            <person name="Searle S."/>
            <person name="Hunt S.E."/>
            <person name="Scott C.E."/>
            <person name="Jones M.C."/>
            <person name="Ainscough R."/>
            <person name="Almeida J.P."/>
            <person name="Ambrose K.D."/>
            <person name="Ashwell R.I.S."/>
            <person name="Babbage A.K."/>
            <person name="Babbage S."/>
            <person name="Bagguley C.L."/>
            <person name="Bailey J."/>
            <person name="Banerjee R."/>
            <person name="Barker D.J."/>
            <person name="Barlow K.F."/>
            <person name="Bates K."/>
            <person name="Beasley H."/>
            <person name="Beasley O."/>
            <person name="Bird C.P."/>
            <person name="Bray-Allen S."/>
            <person name="Brown A.J."/>
            <person name="Brown J.Y."/>
            <person name="Burford D."/>
            <person name="Burrill W."/>
            <person name="Burton J."/>
            <person name="Carder C."/>
            <person name="Carter N.P."/>
            <person name="Chapman J.C."/>
            <person name="Chen Y."/>
            <person name="Clarke G."/>
            <person name="Clark S.Y."/>
            <person name="Clee C.M."/>
            <person name="Clegg S."/>
            <person name="Collier R.E."/>
            <person name="Corby N."/>
            <person name="Crosier M."/>
            <person name="Cummings A.T."/>
            <person name="Davies J."/>
            <person name="Dhami P."/>
            <person name="Dunn M."/>
            <person name="Dutta I."/>
            <person name="Dyer L.W."/>
            <person name="Earthrowl M.E."/>
            <person name="Faulkner L."/>
            <person name="Fleming C.J."/>
            <person name="Frankish A."/>
            <person name="Frankland J.A."/>
            <person name="French L."/>
            <person name="Fricker D.G."/>
            <person name="Garner P."/>
            <person name="Garnett J."/>
            <person name="Ghori J."/>
            <person name="Gilbert J.G.R."/>
            <person name="Glison C."/>
            <person name="Grafham D.V."/>
            <person name="Gribble S."/>
            <person name="Griffiths C."/>
            <person name="Griffiths-Jones S."/>
            <person name="Grocock R."/>
            <person name="Guy J."/>
            <person name="Hall R.E."/>
            <person name="Hammond S."/>
            <person name="Harley J.L."/>
            <person name="Harrison E.S.I."/>
            <person name="Hart E.A."/>
            <person name="Heath P.D."/>
            <person name="Henderson C.D."/>
            <person name="Hopkins B.L."/>
            <person name="Howard P.J."/>
            <person name="Howden P.J."/>
            <person name="Huckle E."/>
            <person name="Johnson C."/>
            <person name="Johnson D."/>
            <person name="Joy A.A."/>
            <person name="Kay M."/>
            <person name="Keenan S."/>
            <person name="Kershaw J.K."/>
            <person name="Kimberley A.M."/>
            <person name="King A."/>
            <person name="Knights A."/>
            <person name="Laird G.K."/>
            <person name="Langford C."/>
            <person name="Lawlor S."/>
            <person name="Leongamornlert D.A."/>
            <person name="Leversha M."/>
            <person name="Lloyd C."/>
            <person name="Lloyd D.M."/>
            <person name="Lovell J."/>
            <person name="Martin S."/>
            <person name="Mashreghi-Mohammadi M."/>
            <person name="Matthews L."/>
            <person name="McLaren S."/>
            <person name="McLay K.E."/>
            <person name="McMurray A."/>
            <person name="Milne S."/>
            <person name="Nickerson T."/>
            <person name="Nisbett J."/>
            <person name="Nordsiek G."/>
            <person name="Pearce A.V."/>
            <person name="Peck A.I."/>
            <person name="Porter K.M."/>
            <person name="Pandian R."/>
            <person name="Pelan S."/>
            <person name="Phillimore B."/>
            <person name="Povey S."/>
            <person name="Ramsey Y."/>
            <person name="Rand V."/>
            <person name="Scharfe M."/>
            <person name="Sehra H.K."/>
            <person name="Shownkeen R."/>
            <person name="Sims S.K."/>
            <person name="Skuce C.D."/>
            <person name="Smith M."/>
            <person name="Steward C.A."/>
            <person name="Swarbreck D."/>
            <person name="Sycamore N."/>
            <person name="Tester J."/>
            <person name="Thorpe A."/>
            <person name="Tracey A."/>
            <person name="Tromans A."/>
            <person name="Thomas D.W."/>
            <person name="Wall M."/>
            <person name="Wallis J.M."/>
            <person name="West A.P."/>
            <person name="Whitehead S.L."/>
            <person name="Willey D.L."/>
            <person name="Williams S.A."/>
            <person name="Wilming L."/>
            <person name="Wray P.W."/>
            <person name="Young L."/>
            <person name="Ashurst J.L."/>
            <person name="Coulson A."/>
            <person name="Blocker H."/>
            <person name="Durbin R.M."/>
            <person name="Sulston J.E."/>
            <person name="Hubbard T."/>
            <person name="Jackson M.J."/>
            <person name="Bentley D.R."/>
            <person name="Beck S."/>
            <person name="Rogers J."/>
            <person name="Dunham I."/>
        </authorList>
    </citation>
    <scope>NUCLEOTIDE SEQUENCE [LARGE SCALE GENOMIC DNA]</scope>
</reference>
<reference key="2">
    <citation type="journal article" date="2004" name="Genome Res.">
        <title>The status, quality, and expansion of the NIH full-length cDNA project: the Mammalian Gene Collection (MGC).</title>
        <authorList>
            <consortium name="The MGC Project Team"/>
        </authorList>
    </citation>
    <scope>NUCLEOTIDE SEQUENCE [LARGE SCALE MRNA] (ISOFORM 3)</scope>
    <source>
        <tissue>Lung</tissue>
        <tissue>Testis</tissue>
    </source>
</reference>
<reference key="3">
    <citation type="submission" date="2002-01" db="EMBL/GenBank/DDBJ databases">
        <title>The nucleotide sequence of a long cDNA clone isolated from human spleen.</title>
        <authorList>
            <person name="Jikuya H."/>
            <person name="Takano J."/>
            <person name="Nomura N."/>
            <person name="Kikuno R."/>
            <person name="Nagase T."/>
            <person name="Ohara O."/>
        </authorList>
    </citation>
    <scope>NUCLEOTIDE SEQUENCE [MRNA] OF 177-384 (ISOFORM 2)</scope>
    <source>
        <tissue>Spleen</tissue>
    </source>
</reference>
<reference key="4">
    <citation type="journal article" date="2004" name="Mol. Endocrinol.">
        <title>Identification of estrogen-responsive genes by complementary deoxyribonucleic acid microarray and characterization of a novel early estrogen-induced gene: EEIG1.</title>
        <authorList>
            <person name="Wang D.Y."/>
            <person name="Fulthorpe R."/>
            <person name="Liss S.N."/>
            <person name="Edwards E.A."/>
        </authorList>
    </citation>
    <scope>FUNCTION</scope>
</reference>
<comment type="function">
    <text evidence="1 4">Key component of TNFSF11/RANKL- and TNF-induced osteoclastogenesis pathways, thereby mediates bone resorption in pathological bone loss conditions (By similarity). Required for TNFSF11/RANKL-induced osteoclastogenesis via its interaction with TNFRSF11A/RANK, thereby facilitates the downsteam transcription of NFATC1 and activation of PLCG2 (By similarity). Facilitates recruitment of the transcriptional repressor PRDM1/BLIMP1 to the promoter of the anti-osteoclastogenesis gene IRF8, thereby resulting in transcription of osteoclast differentiation factors (By similarity). May play a role in estrogen action (PubMed:14605097).</text>
</comment>
<comment type="subunit">
    <text evidence="1">Part of a complex composed of EEIG1, TNFRSF11A/RANK, PLCG2, GAB2, TEC and BTK; complex formation increases in the presence of TNFSF11/RANKL (By similarity). Interacts with PRDM1/BLIMP1; following TNFSF11/RANKL stimulation in bone marrow-derived macrophages, the interaction promotes the binding of PRDM1/BLIMP1 to the gene promoter of IRF8 (By similarity).</text>
</comment>
<comment type="interaction">
    <interactant intactId="EBI-10246318">
        <id>Q5T9C2</id>
    </interactant>
    <interactant intactId="EBI-744099">
        <id>Q9H0I2</id>
        <label>ENKD1</label>
    </interactant>
    <organismsDiffer>false</organismsDiffer>
    <experiments>3</experiments>
</comment>
<comment type="interaction">
    <interactant intactId="EBI-10246318">
        <id>Q5T9C2</id>
    </interactant>
    <interactant intactId="EBI-10173690">
        <id>Q6FGM0</id>
        <label>SH3GL1</label>
    </interactant>
    <organismsDiffer>false</organismsDiffer>
    <experiments>3</experiments>
</comment>
<comment type="interaction">
    <interactant intactId="EBI-10246318">
        <id>Q5T9C2</id>
    </interactant>
    <interactant intactId="EBI-2477305">
        <id>Q86WV1</id>
        <label>SKAP1</label>
    </interactant>
    <organismsDiffer>false</organismsDiffer>
    <experiments>4</experiments>
</comment>
<comment type="interaction">
    <interactant intactId="EBI-11980989">
        <id>Q5T9C2-3</id>
    </interactant>
    <interactant intactId="EBI-702093">
        <id>P56945</id>
        <label>BCAR1</label>
    </interactant>
    <organismsDiffer>false</organismsDiffer>
    <experiments>3</experiments>
</comment>
<comment type="interaction">
    <interactant intactId="EBI-11980989">
        <id>Q5T9C2-3</id>
    </interactant>
    <interactant intactId="EBI-3867333">
        <id>A8MQ03</id>
        <label>CYSRT1</label>
    </interactant>
    <organismsDiffer>false</organismsDiffer>
    <experiments>3</experiments>
</comment>
<comment type="interaction">
    <interactant intactId="EBI-11980989">
        <id>Q5T9C2-3</id>
    </interactant>
    <interactant intactId="EBI-11746523">
        <id>Q14511-2</id>
        <label>NEDD9</label>
    </interactant>
    <organismsDiffer>false</organismsDiffer>
    <experiments>3</experiments>
</comment>
<comment type="interaction">
    <interactant intactId="EBI-11980989">
        <id>Q5T9C2-3</id>
    </interactant>
    <interactant intactId="EBI-357275">
        <id>Q99471</id>
        <label>PFDN5</label>
    </interactant>
    <organismsDiffer>false</organismsDiffer>
    <experiments>3</experiments>
</comment>
<comment type="interaction">
    <interactant intactId="EBI-11980989">
        <id>Q5T9C2-3</id>
    </interactant>
    <interactant intactId="EBI-697911">
        <id>Q99961</id>
        <label>SH3GL1</label>
    </interactant>
    <organismsDiffer>false</organismsDiffer>
    <experiments>3</experiments>
</comment>
<comment type="subcellular location">
    <subcellularLocation>
        <location evidence="1">Nucleus</location>
    </subcellularLocation>
    <subcellularLocation>
        <location evidence="1">Cytoplasm</location>
    </subcellularLocation>
    <subcellularLocation>
        <location evidence="1">Membrane raft</location>
    </subcellularLocation>
</comment>
<comment type="alternative products">
    <event type="alternative splicing"/>
    <isoform>
        <id>Q5T9C2-1</id>
        <name>1</name>
        <sequence type="displayed"/>
    </isoform>
    <isoform>
        <id>Q5T9C2-2</id>
        <name>2</name>
        <sequence type="described" ref="VSP_021744"/>
    </isoform>
    <isoform>
        <id>Q5T9C2-3</id>
        <name>3</name>
        <sequence type="described" ref="VSP_043857"/>
    </isoform>
</comment>
<comment type="induction">
    <text>By 17-beta-estradiol but also by a group of natural and synthetic estrogens as well as by estrogenic environmental compounds. Repressed by the antiestrogen 4-hydroxy-tamoxifen.</text>
</comment>
<comment type="similarity">
    <text evidence="8">Belongs to the EEIG family.</text>
</comment>
<evidence type="ECO:0000250" key="1">
    <source>
        <dbReference type="UniProtKB" id="Q78T81"/>
    </source>
</evidence>
<evidence type="ECO:0000255" key="2">
    <source>
        <dbReference type="PROSITE-ProRule" id="PRU01186"/>
    </source>
</evidence>
<evidence type="ECO:0000256" key="3">
    <source>
        <dbReference type="SAM" id="MobiDB-lite"/>
    </source>
</evidence>
<evidence type="ECO:0000269" key="4">
    <source>
    </source>
</evidence>
<evidence type="ECO:0000303" key="5">
    <source>
    </source>
</evidence>
<evidence type="ECO:0000303" key="6">
    <source>
    </source>
</evidence>
<evidence type="ECO:0000303" key="7">
    <source ref="3"/>
</evidence>
<evidence type="ECO:0000305" key="8"/>
<evidence type="ECO:0000312" key="9">
    <source>
        <dbReference type="HGNC" id="HGNC:31419"/>
    </source>
</evidence>
<protein>
    <recommendedName>
        <fullName>Early estrogen-induced gene 1 protein</fullName>
        <shortName>EEIG1</shortName>
    </recommendedName>
</protein>
<proteinExistence type="evidence at protein level"/>
<accession>Q5T9C2</accession>
<accession>A2A329</accession>
<accession>Q8TEL4</accession>
<feature type="chain" id="PRO_0000261634" description="Early estrogen-induced gene 1 protein">
    <location>
        <begin position="1"/>
        <end position="384"/>
    </location>
</feature>
<feature type="domain" description="C2 NT-type" evidence="2">
    <location>
        <begin position="2"/>
        <end position="145"/>
    </location>
</feature>
<feature type="region of interest" description="Required for interaction with TNFRSF11A/RANK" evidence="1">
    <location>
        <begin position="129"/>
        <end position="138"/>
    </location>
</feature>
<feature type="region of interest" description="Disordered" evidence="3">
    <location>
        <begin position="173"/>
        <end position="315"/>
    </location>
</feature>
<feature type="compositionally biased region" description="Low complexity" evidence="3">
    <location>
        <begin position="183"/>
        <end position="193"/>
    </location>
</feature>
<feature type="compositionally biased region" description="Polar residues" evidence="3">
    <location>
        <begin position="227"/>
        <end position="254"/>
    </location>
</feature>
<feature type="compositionally biased region" description="Basic and acidic residues" evidence="3">
    <location>
        <begin position="280"/>
        <end position="292"/>
    </location>
</feature>
<feature type="compositionally biased region" description="Basic and acidic residues" evidence="3">
    <location>
        <begin position="299"/>
        <end position="315"/>
    </location>
</feature>
<feature type="splice variant" id="VSP_043857" description="In isoform 3." evidence="6">
    <location>
        <begin position="1"/>
        <end position="142"/>
    </location>
</feature>
<feature type="splice variant" id="VSP_021744" description="In isoform 2." evidence="7">
    <location>
        <begin position="371"/>
        <end position="384"/>
    </location>
</feature>
<keyword id="KW-0025">Alternative splicing</keyword>
<keyword id="KW-0963">Cytoplasm</keyword>
<keyword id="KW-0472">Membrane</keyword>
<keyword id="KW-0539">Nucleus</keyword>
<keyword id="KW-1267">Proteomics identification</keyword>
<keyword id="KW-1185">Reference proteome</keyword>
<name>EEIG1_HUMAN</name>